<feature type="chain" id="PRO_0000232331" description="ATP-dependent rRNA helicase spb-4">
    <location>
        <begin position="1"/>
        <end position="654"/>
    </location>
</feature>
<feature type="domain" description="Helicase ATP-binding" evidence="3">
    <location>
        <begin position="48"/>
        <end position="249"/>
    </location>
</feature>
<feature type="domain" description="Helicase C-terminal" evidence="4">
    <location>
        <begin position="286"/>
        <end position="444"/>
    </location>
</feature>
<feature type="region of interest" description="Disordered" evidence="5">
    <location>
        <begin position="542"/>
        <end position="654"/>
    </location>
</feature>
<feature type="coiled-coil region" evidence="2">
    <location>
        <begin position="531"/>
        <end position="631"/>
    </location>
</feature>
<feature type="short sequence motif" description="Q motif" evidence="6">
    <location>
        <begin position="17"/>
        <end position="45"/>
    </location>
</feature>
<feature type="short sequence motif" description="DEAD box" evidence="6">
    <location>
        <begin position="197"/>
        <end position="200"/>
    </location>
</feature>
<feature type="compositionally biased region" description="Basic and acidic residues" evidence="5">
    <location>
        <begin position="542"/>
        <end position="577"/>
    </location>
</feature>
<feature type="compositionally biased region" description="Basic residues" evidence="5">
    <location>
        <begin position="578"/>
        <end position="588"/>
    </location>
</feature>
<feature type="compositionally biased region" description="Basic and acidic residues" evidence="5">
    <location>
        <begin position="589"/>
        <end position="625"/>
    </location>
</feature>
<feature type="compositionally biased region" description="Acidic residues" evidence="5">
    <location>
        <begin position="644"/>
        <end position="654"/>
    </location>
</feature>
<feature type="binding site" evidence="3">
    <location>
        <begin position="61"/>
        <end position="68"/>
    </location>
    <ligand>
        <name>ATP</name>
        <dbReference type="ChEBI" id="CHEBI:30616"/>
    </ligand>
</feature>
<organism>
    <name type="scientific">Neurospora crassa (strain ATCC 24698 / 74-OR23-1A / CBS 708.71 / DSM 1257 / FGSC 987)</name>
    <dbReference type="NCBI Taxonomy" id="367110"/>
    <lineage>
        <taxon>Eukaryota</taxon>
        <taxon>Fungi</taxon>
        <taxon>Dikarya</taxon>
        <taxon>Ascomycota</taxon>
        <taxon>Pezizomycotina</taxon>
        <taxon>Sordariomycetes</taxon>
        <taxon>Sordariomycetidae</taxon>
        <taxon>Sordariales</taxon>
        <taxon>Sordariaceae</taxon>
        <taxon>Neurospora</taxon>
    </lineage>
</organism>
<proteinExistence type="inferred from homology"/>
<sequence>MAPTQPQTKVRKPPRSWDALTPPLAQWILDYLSSMGFTQPTPVQKSCLELFRGNKDVVVEAVTGSGKTLAFLIPVVEKLLRGEEPAKRNHVQGIIISPTRELATQIYNVLVSLVKFHEPSAEAISHAKSDEKRPTATQPVVVPQLLVGGTTKAAEDLGTFLRLSPNLLIGTPGRLAELLSSAYVKAPASTFEVLIMDEADRLLDMGFANELNRILGYLPKQRRTGLFSASLSDAVERLITVGLLYPHKITVRVKSLKDGGIIQERKTPMSLQMSYLVTPASQKMPAIVQLLEKLEPRPQRSIIFFSSCMAVKYFSRILGAVLPAGFSVTSLHGKLEPKVREKNYERFVNTTSPMVLLTTDLAARGLDIPQVDLVIQHDPPTDTKVFIHRCGRAGRAGRRGLAVVLLQPGREEGYVQLLEVRQTPITPLEKPAISVTPDEVERVSAAFRSQALADREIFQMAQLAFVSWTRSYIEHQASSIFRIADLDWLDLAKGYGLLELPKMPEVREAKIDRSLGLGINTEEIPFKDKVREKKRQEELAKWKEEKAKRAQEENTGDKRKKNEAWSGKAEQEETKLQRREKKRRKREAKKFSEMTEKEKEEHLKLEQMIEEVRKRNEAKAAEERAAALAANPPKPKAPVKKVDDSDEEFGGFDD</sequence>
<gene>
    <name evidence="1" type="primary">spb-4</name>
    <name type="ORF">B9B11.200</name>
    <name type="ORF">NCU03380</name>
</gene>
<accession>Q873H9</accession>
<accession>Q1K5G6</accession>
<name>SPB4_NEUCR</name>
<keyword id="KW-0067">ATP-binding</keyword>
<keyword id="KW-0175">Coiled coil</keyword>
<keyword id="KW-0347">Helicase</keyword>
<keyword id="KW-0378">Hydrolase</keyword>
<keyword id="KW-0547">Nucleotide-binding</keyword>
<keyword id="KW-0539">Nucleus</keyword>
<keyword id="KW-1185">Reference proteome</keyword>
<keyword id="KW-0690">Ribosome biogenesis</keyword>
<keyword id="KW-0694">RNA-binding</keyword>
<keyword id="KW-0698">rRNA processing</keyword>
<comment type="function">
    <text evidence="1">ATP-binding RNA helicase involved in the biogenesis of 60S ribosomal subunits. Binds 90S pre-ribosomal particles and dissociates from pre-60S ribosomal particles after processing of 27SB pre-rRNA. Required for the normal formation of 18S rRNA through the processing of pre-rRNAs at sites A0, A1 and A2, and the normal formation of 25S and 5.8S rRNAs through the processing of pre-rRNAs at sites C1 and C2.</text>
</comment>
<comment type="catalytic activity">
    <reaction evidence="1">
        <text>ATP + H2O = ADP + phosphate + H(+)</text>
        <dbReference type="Rhea" id="RHEA:13065"/>
        <dbReference type="ChEBI" id="CHEBI:15377"/>
        <dbReference type="ChEBI" id="CHEBI:15378"/>
        <dbReference type="ChEBI" id="CHEBI:30616"/>
        <dbReference type="ChEBI" id="CHEBI:43474"/>
        <dbReference type="ChEBI" id="CHEBI:456216"/>
        <dbReference type="EC" id="3.6.4.13"/>
    </reaction>
</comment>
<comment type="subunit">
    <text evidence="1">Component of pre-60S ribosomal complexes.</text>
</comment>
<comment type="subcellular location">
    <subcellularLocation>
        <location evidence="1">Nucleus</location>
        <location evidence="1">Nucleolus</location>
    </subcellularLocation>
</comment>
<comment type="domain">
    <text>The Q motif is unique to and characteristic of the DEAD box family of RNA helicases and controls ATP binding and hydrolysis.</text>
</comment>
<comment type="similarity">
    <text evidence="6">Belongs to the DEAD box helicase family. DDX55/SPB4 subfamily.</text>
</comment>
<dbReference type="EC" id="3.6.4.13" evidence="1"/>
<dbReference type="EMBL" id="BX284747">
    <property type="protein sequence ID" value="CAD70326.1"/>
    <property type="molecule type" value="Genomic_DNA"/>
</dbReference>
<dbReference type="EMBL" id="CM002237">
    <property type="protein sequence ID" value="EAA27591.1"/>
    <property type="molecule type" value="Genomic_DNA"/>
</dbReference>
<dbReference type="RefSeq" id="XP_956827.1">
    <property type="nucleotide sequence ID" value="XM_951734.2"/>
</dbReference>
<dbReference type="SMR" id="Q873H9"/>
<dbReference type="FunCoup" id="Q873H9">
    <property type="interactions" value="1133"/>
</dbReference>
<dbReference type="STRING" id="367110.Q873H9"/>
<dbReference type="PaxDb" id="5141-EFNCRP00000002745"/>
<dbReference type="EnsemblFungi" id="EAA27591">
    <property type="protein sequence ID" value="EAA27591"/>
    <property type="gene ID" value="NCU03380"/>
</dbReference>
<dbReference type="GeneID" id="3872974"/>
<dbReference type="KEGG" id="ncr:NCU03380"/>
<dbReference type="VEuPathDB" id="FungiDB:NCU03380"/>
<dbReference type="HOGENOM" id="CLU_003041_26_4_1"/>
<dbReference type="InParanoid" id="Q873H9"/>
<dbReference type="OMA" id="AYKEHEC"/>
<dbReference type="OrthoDB" id="7396459at2759"/>
<dbReference type="Proteomes" id="UP000001805">
    <property type="component" value="Chromosome 6, Linkage Group II"/>
</dbReference>
<dbReference type="GO" id="GO:0030686">
    <property type="term" value="C:90S preribosome"/>
    <property type="evidence" value="ECO:0007669"/>
    <property type="project" value="EnsemblFungi"/>
</dbReference>
<dbReference type="GO" id="GO:0005730">
    <property type="term" value="C:nucleolus"/>
    <property type="evidence" value="ECO:0000318"/>
    <property type="project" value="GO_Central"/>
</dbReference>
<dbReference type="GO" id="GO:0005654">
    <property type="term" value="C:nucleoplasm"/>
    <property type="evidence" value="ECO:0007669"/>
    <property type="project" value="EnsemblFungi"/>
</dbReference>
<dbReference type="GO" id="GO:0030687">
    <property type="term" value="C:preribosome, large subunit precursor"/>
    <property type="evidence" value="ECO:0007669"/>
    <property type="project" value="EnsemblFungi"/>
</dbReference>
<dbReference type="GO" id="GO:0005524">
    <property type="term" value="F:ATP binding"/>
    <property type="evidence" value="ECO:0007669"/>
    <property type="project" value="UniProtKB-KW"/>
</dbReference>
<dbReference type="GO" id="GO:0016887">
    <property type="term" value="F:ATP hydrolysis activity"/>
    <property type="evidence" value="ECO:0007669"/>
    <property type="project" value="RHEA"/>
</dbReference>
<dbReference type="GO" id="GO:0003723">
    <property type="term" value="F:RNA binding"/>
    <property type="evidence" value="ECO:0007669"/>
    <property type="project" value="UniProtKB-KW"/>
</dbReference>
<dbReference type="GO" id="GO:0003724">
    <property type="term" value="F:RNA helicase activity"/>
    <property type="evidence" value="ECO:0007669"/>
    <property type="project" value="UniProtKB-EC"/>
</dbReference>
<dbReference type="GO" id="GO:1902626">
    <property type="term" value="P:assembly of large subunit precursor of preribosome"/>
    <property type="evidence" value="ECO:0007669"/>
    <property type="project" value="EnsemblFungi"/>
</dbReference>
<dbReference type="GO" id="GO:0000470">
    <property type="term" value="P:maturation of LSU-rRNA"/>
    <property type="evidence" value="ECO:0007669"/>
    <property type="project" value="EnsemblFungi"/>
</dbReference>
<dbReference type="CDD" id="cd17960">
    <property type="entry name" value="DEADc_DDX55"/>
    <property type="match status" value="1"/>
</dbReference>
<dbReference type="CDD" id="cd18787">
    <property type="entry name" value="SF2_C_DEAD"/>
    <property type="match status" value="1"/>
</dbReference>
<dbReference type="Gene3D" id="3.40.50.300">
    <property type="entry name" value="P-loop containing nucleotide triphosphate hydrolases"/>
    <property type="match status" value="2"/>
</dbReference>
<dbReference type="InterPro" id="IPR056330">
    <property type="entry name" value="CTT_SPB4"/>
</dbReference>
<dbReference type="InterPro" id="IPR011545">
    <property type="entry name" value="DEAD/DEAH_box_helicase_dom"/>
</dbReference>
<dbReference type="InterPro" id="IPR014001">
    <property type="entry name" value="Helicase_ATP-bd"/>
</dbReference>
<dbReference type="InterPro" id="IPR001650">
    <property type="entry name" value="Helicase_C-like"/>
</dbReference>
<dbReference type="InterPro" id="IPR027417">
    <property type="entry name" value="P-loop_NTPase"/>
</dbReference>
<dbReference type="InterPro" id="IPR000629">
    <property type="entry name" value="RNA-helicase_DEAD-box_CS"/>
</dbReference>
<dbReference type="InterPro" id="IPR014014">
    <property type="entry name" value="RNA_helicase_DEAD_Q_motif"/>
</dbReference>
<dbReference type="InterPro" id="IPR025313">
    <property type="entry name" value="SPB4-like_CTE"/>
</dbReference>
<dbReference type="PANTHER" id="PTHR24031">
    <property type="entry name" value="RNA HELICASE"/>
    <property type="match status" value="1"/>
</dbReference>
<dbReference type="Pfam" id="PF13959">
    <property type="entry name" value="CTE_SPB4"/>
    <property type="match status" value="1"/>
</dbReference>
<dbReference type="Pfam" id="PF23681">
    <property type="entry name" value="CTT_SPB4"/>
    <property type="match status" value="1"/>
</dbReference>
<dbReference type="Pfam" id="PF00270">
    <property type="entry name" value="DEAD"/>
    <property type="match status" value="1"/>
</dbReference>
<dbReference type="Pfam" id="PF00271">
    <property type="entry name" value="Helicase_C"/>
    <property type="match status" value="1"/>
</dbReference>
<dbReference type="SMART" id="SM00487">
    <property type="entry name" value="DEXDc"/>
    <property type="match status" value="1"/>
</dbReference>
<dbReference type="SMART" id="SM01178">
    <property type="entry name" value="DUF4217"/>
    <property type="match status" value="1"/>
</dbReference>
<dbReference type="SMART" id="SM00490">
    <property type="entry name" value="HELICc"/>
    <property type="match status" value="1"/>
</dbReference>
<dbReference type="SUPFAM" id="SSF52540">
    <property type="entry name" value="P-loop containing nucleoside triphosphate hydrolases"/>
    <property type="match status" value="1"/>
</dbReference>
<dbReference type="PROSITE" id="PS00039">
    <property type="entry name" value="DEAD_ATP_HELICASE"/>
    <property type="match status" value="1"/>
</dbReference>
<dbReference type="PROSITE" id="PS51192">
    <property type="entry name" value="HELICASE_ATP_BIND_1"/>
    <property type="match status" value="1"/>
</dbReference>
<dbReference type="PROSITE" id="PS51194">
    <property type="entry name" value="HELICASE_CTER"/>
    <property type="match status" value="1"/>
</dbReference>
<dbReference type="PROSITE" id="PS51195">
    <property type="entry name" value="Q_MOTIF"/>
    <property type="match status" value="1"/>
</dbReference>
<protein>
    <recommendedName>
        <fullName evidence="6">ATP-dependent rRNA helicase spb-4</fullName>
        <ecNumber evidence="1">3.6.4.13</ecNumber>
    </recommendedName>
</protein>
<reference key="1">
    <citation type="journal article" date="2003" name="Nucleic Acids Res.">
        <title>What's in the genome of a filamentous fungus? Analysis of the Neurospora genome sequence.</title>
        <authorList>
            <person name="Mannhaupt G."/>
            <person name="Montrone C."/>
            <person name="Haase D."/>
            <person name="Mewes H.-W."/>
            <person name="Aign V."/>
            <person name="Hoheisel J.D."/>
            <person name="Fartmann B."/>
            <person name="Nyakatura G."/>
            <person name="Kempken F."/>
            <person name="Maier J."/>
            <person name="Schulte U."/>
        </authorList>
    </citation>
    <scope>NUCLEOTIDE SEQUENCE [LARGE SCALE GENOMIC DNA]</scope>
    <source>
        <strain>ATCC 24698 / 74-OR23-1A / CBS 708.71 / DSM 1257 / FGSC 987</strain>
    </source>
</reference>
<reference key="2">
    <citation type="journal article" date="2003" name="Nature">
        <title>The genome sequence of the filamentous fungus Neurospora crassa.</title>
        <authorList>
            <person name="Galagan J.E."/>
            <person name="Calvo S.E."/>
            <person name="Borkovich K.A."/>
            <person name="Selker E.U."/>
            <person name="Read N.D."/>
            <person name="Jaffe D.B."/>
            <person name="FitzHugh W."/>
            <person name="Ma L.-J."/>
            <person name="Smirnov S."/>
            <person name="Purcell S."/>
            <person name="Rehman B."/>
            <person name="Elkins T."/>
            <person name="Engels R."/>
            <person name="Wang S."/>
            <person name="Nielsen C.B."/>
            <person name="Butler J."/>
            <person name="Endrizzi M."/>
            <person name="Qui D."/>
            <person name="Ianakiev P."/>
            <person name="Bell-Pedersen D."/>
            <person name="Nelson M.A."/>
            <person name="Werner-Washburne M."/>
            <person name="Selitrennikoff C.P."/>
            <person name="Kinsey J.A."/>
            <person name="Braun E.L."/>
            <person name="Zelter A."/>
            <person name="Schulte U."/>
            <person name="Kothe G.O."/>
            <person name="Jedd G."/>
            <person name="Mewes H.-W."/>
            <person name="Staben C."/>
            <person name="Marcotte E."/>
            <person name="Greenberg D."/>
            <person name="Roy A."/>
            <person name="Foley K."/>
            <person name="Naylor J."/>
            <person name="Stange-Thomann N."/>
            <person name="Barrett R."/>
            <person name="Gnerre S."/>
            <person name="Kamal M."/>
            <person name="Kamvysselis M."/>
            <person name="Mauceli E.W."/>
            <person name="Bielke C."/>
            <person name="Rudd S."/>
            <person name="Frishman D."/>
            <person name="Krystofova S."/>
            <person name="Rasmussen C."/>
            <person name="Metzenberg R.L."/>
            <person name="Perkins D.D."/>
            <person name="Kroken S."/>
            <person name="Cogoni C."/>
            <person name="Macino G."/>
            <person name="Catcheside D.E.A."/>
            <person name="Li W."/>
            <person name="Pratt R.J."/>
            <person name="Osmani S.A."/>
            <person name="DeSouza C.P.C."/>
            <person name="Glass N.L."/>
            <person name="Orbach M.J."/>
            <person name="Berglund J.A."/>
            <person name="Voelker R."/>
            <person name="Yarden O."/>
            <person name="Plamann M."/>
            <person name="Seiler S."/>
            <person name="Dunlap J.C."/>
            <person name="Radford A."/>
            <person name="Aramayo R."/>
            <person name="Natvig D.O."/>
            <person name="Alex L.A."/>
            <person name="Mannhaupt G."/>
            <person name="Ebbole D.J."/>
            <person name="Freitag M."/>
            <person name="Paulsen I."/>
            <person name="Sachs M.S."/>
            <person name="Lander E.S."/>
            <person name="Nusbaum C."/>
            <person name="Birren B.W."/>
        </authorList>
    </citation>
    <scope>NUCLEOTIDE SEQUENCE [LARGE SCALE GENOMIC DNA]</scope>
    <source>
        <strain>ATCC 24698 / 74-OR23-1A / CBS 708.71 / DSM 1257 / FGSC 987</strain>
    </source>
</reference>
<evidence type="ECO:0000250" key="1">
    <source>
        <dbReference type="UniProtKB" id="P25808"/>
    </source>
</evidence>
<evidence type="ECO:0000255" key="2"/>
<evidence type="ECO:0000255" key="3">
    <source>
        <dbReference type="PROSITE-ProRule" id="PRU00541"/>
    </source>
</evidence>
<evidence type="ECO:0000255" key="4">
    <source>
        <dbReference type="PROSITE-ProRule" id="PRU00542"/>
    </source>
</evidence>
<evidence type="ECO:0000256" key="5">
    <source>
        <dbReference type="SAM" id="MobiDB-lite"/>
    </source>
</evidence>
<evidence type="ECO:0000305" key="6"/>